<organism>
    <name type="scientific">Methanosarcina acetivorans (strain ATCC 35395 / DSM 2834 / JCM 12185 / C2A)</name>
    <dbReference type="NCBI Taxonomy" id="188937"/>
    <lineage>
        <taxon>Archaea</taxon>
        <taxon>Methanobacteriati</taxon>
        <taxon>Methanobacteriota</taxon>
        <taxon>Stenosarchaea group</taxon>
        <taxon>Methanomicrobia</taxon>
        <taxon>Methanosarcinales</taxon>
        <taxon>Methanosarcinaceae</taxon>
        <taxon>Methanosarcina</taxon>
    </lineage>
</organism>
<gene>
    <name evidence="1" type="primary">aroE</name>
    <name type="ordered locus">MA_4594</name>
</gene>
<sequence>MKRVFGVFGDPVGHSLSPAMHNSAFSALGMDCIYHAFRVRPENLRKAILGAEAMGFGGLNLTVPLKEEALKLDFIRPDPLAERIGAVNTVVFSETGEIRGYNTDGLGARQALLEAAVEIRGSKVVVAGAGGAARAVAFQLAADGAEITVVNRTEERAVELAKDVAAASLPGKINGTGLSGLKELLRDADILINTTTLGMHPNTDTTIATAEELHSGLTVFDIVYNPLETRLLKEAKVAGAKTVSGVLMLVYQGAEAFKLWTGVEAPAELMKKTVLEALQA</sequence>
<accession>Q8THC3</accession>
<proteinExistence type="inferred from homology"/>
<evidence type="ECO:0000255" key="1">
    <source>
        <dbReference type="HAMAP-Rule" id="MF_00222"/>
    </source>
</evidence>
<keyword id="KW-0028">Amino-acid biosynthesis</keyword>
<keyword id="KW-0057">Aromatic amino acid biosynthesis</keyword>
<keyword id="KW-0521">NADP</keyword>
<keyword id="KW-0560">Oxidoreductase</keyword>
<keyword id="KW-1185">Reference proteome</keyword>
<reference key="1">
    <citation type="journal article" date="2002" name="Genome Res.">
        <title>The genome of Methanosarcina acetivorans reveals extensive metabolic and physiological diversity.</title>
        <authorList>
            <person name="Galagan J.E."/>
            <person name="Nusbaum C."/>
            <person name="Roy A."/>
            <person name="Endrizzi M.G."/>
            <person name="Macdonald P."/>
            <person name="FitzHugh W."/>
            <person name="Calvo S."/>
            <person name="Engels R."/>
            <person name="Smirnov S."/>
            <person name="Atnoor D."/>
            <person name="Brown A."/>
            <person name="Allen N."/>
            <person name="Naylor J."/>
            <person name="Stange-Thomann N."/>
            <person name="DeArellano K."/>
            <person name="Johnson R."/>
            <person name="Linton L."/>
            <person name="McEwan P."/>
            <person name="McKernan K."/>
            <person name="Talamas J."/>
            <person name="Tirrell A."/>
            <person name="Ye W."/>
            <person name="Zimmer A."/>
            <person name="Barber R.D."/>
            <person name="Cann I."/>
            <person name="Graham D.E."/>
            <person name="Grahame D.A."/>
            <person name="Guss A.M."/>
            <person name="Hedderich R."/>
            <person name="Ingram-Smith C."/>
            <person name="Kuettner H.C."/>
            <person name="Krzycki J.A."/>
            <person name="Leigh J.A."/>
            <person name="Li W."/>
            <person name="Liu J."/>
            <person name="Mukhopadhyay B."/>
            <person name="Reeve J.N."/>
            <person name="Smith K."/>
            <person name="Springer T.A."/>
            <person name="Umayam L.A."/>
            <person name="White O."/>
            <person name="White R.H."/>
            <person name="de Macario E.C."/>
            <person name="Ferry J.G."/>
            <person name="Jarrell K.F."/>
            <person name="Jing H."/>
            <person name="Macario A.J.L."/>
            <person name="Paulsen I.T."/>
            <person name="Pritchett M."/>
            <person name="Sowers K.R."/>
            <person name="Swanson R.V."/>
            <person name="Zinder S.H."/>
            <person name="Lander E."/>
            <person name="Metcalf W.W."/>
            <person name="Birren B."/>
        </authorList>
    </citation>
    <scope>NUCLEOTIDE SEQUENCE [LARGE SCALE GENOMIC DNA]</scope>
    <source>
        <strain>ATCC 35395 / DSM 2834 / JCM 12185 / C2A</strain>
    </source>
</reference>
<dbReference type="EC" id="1.1.1.25" evidence="1"/>
<dbReference type="EMBL" id="AE010299">
    <property type="protein sequence ID" value="AAM07933.1"/>
    <property type="molecule type" value="Genomic_DNA"/>
</dbReference>
<dbReference type="RefSeq" id="WP_011024467.1">
    <property type="nucleotide sequence ID" value="NC_003552.1"/>
</dbReference>
<dbReference type="SMR" id="Q8THC3"/>
<dbReference type="FunCoup" id="Q8THC3">
    <property type="interactions" value="81"/>
</dbReference>
<dbReference type="STRING" id="188937.MA_4594"/>
<dbReference type="EnsemblBacteria" id="AAM07933">
    <property type="protein sequence ID" value="AAM07933"/>
    <property type="gene ID" value="MA_4594"/>
</dbReference>
<dbReference type="GeneID" id="1476488"/>
<dbReference type="KEGG" id="mac:MA_4594"/>
<dbReference type="HOGENOM" id="CLU_044063_0_1_2"/>
<dbReference type="InParanoid" id="Q8THC3"/>
<dbReference type="OrthoDB" id="8744at2157"/>
<dbReference type="PhylomeDB" id="Q8THC3"/>
<dbReference type="UniPathway" id="UPA00053">
    <property type="reaction ID" value="UER00087"/>
</dbReference>
<dbReference type="Proteomes" id="UP000002487">
    <property type="component" value="Chromosome"/>
</dbReference>
<dbReference type="GO" id="GO:0050661">
    <property type="term" value="F:NADP binding"/>
    <property type="evidence" value="ECO:0007669"/>
    <property type="project" value="InterPro"/>
</dbReference>
<dbReference type="GO" id="GO:0004764">
    <property type="term" value="F:shikimate 3-dehydrogenase (NADP+) activity"/>
    <property type="evidence" value="ECO:0000318"/>
    <property type="project" value="GO_Central"/>
</dbReference>
<dbReference type="GO" id="GO:0008652">
    <property type="term" value="P:amino acid biosynthetic process"/>
    <property type="evidence" value="ECO:0007669"/>
    <property type="project" value="UniProtKB-KW"/>
</dbReference>
<dbReference type="GO" id="GO:0009073">
    <property type="term" value="P:aromatic amino acid family biosynthetic process"/>
    <property type="evidence" value="ECO:0007669"/>
    <property type="project" value="UniProtKB-KW"/>
</dbReference>
<dbReference type="GO" id="GO:0009423">
    <property type="term" value="P:chorismate biosynthetic process"/>
    <property type="evidence" value="ECO:0000318"/>
    <property type="project" value="GO_Central"/>
</dbReference>
<dbReference type="GO" id="GO:0019632">
    <property type="term" value="P:shikimate metabolic process"/>
    <property type="evidence" value="ECO:0000318"/>
    <property type="project" value="GO_Central"/>
</dbReference>
<dbReference type="CDD" id="cd01065">
    <property type="entry name" value="NAD_bind_Shikimate_DH"/>
    <property type="match status" value="1"/>
</dbReference>
<dbReference type="FunFam" id="3.40.50.720:FF:000086">
    <property type="entry name" value="Quinate/shikimate dehydrogenase"/>
    <property type="match status" value="1"/>
</dbReference>
<dbReference type="Gene3D" id="3.40.50.10860">
    <property type="entry name" value="Leucine Dehydrogenase, chain A, domain 1"/>
    <property type="match status" value="1"/>
</dbReference>
<dbReference type="Gene3D" id="3.40.50.720">
    <property type="entry name" value="NAD(P)-binding Rossmann-like Domain"/>
    <property type="match status" value="1"/>
</dbReference>
<dbReference type="HAMAP" id="MF_00222">
    <property type="entry name" value="Shikimate_DH_AroE"/>
    <property type="match status" value="1"/>
</dbReference>
<dbReference type="InterPro" id="IPR046346">
    <property type="entry name" value="Aminoacid_DH-like_N_sf"/>
</dbReference>
<dbReference type="InterPro" id="IPR036291">
    <property type="entry name" value="NAD(P)-bd_dom_sf"/>
</dbReference>
<dbReference type="InterPro" id="IPR041121">
    <property type="entry name" value="SDH_C"/>
</dbReference>
<dbReference type="InterPro" id="IPR011342">
    <property type="entry name" value="Shikimate_DH"/>
</dbReference>
<dbReference type="InterPro" id="IPR013708">
    <property type="entry name" value="Shikimate_DH-bd_N"/>
</dbReference>
<dbReference type="InterPro" id="IPR022893">
    <property type="entry name" value="Shikimate_DH_fam"/>
</dbReference>
<dbReference type="InterPro" id="IPR006151">
    <property type="entry name" value="Shikm_DH/Glu-tRNA_Rdtase"/>
</dbReference>
<dbReference type="NCBIfam" id="TIGR00507">
    <property type="entry name" value="aroE"/>
    <property type="match status" value="1"/>
</dbReference>
<dbReference type="NCBIfam" id="NF001319">
    <property type="entry name" value="PRK00258.3-3"/>
    <property type="match status" value="1"/>
</dbReference>
<dbReference type="PANTHER" id="PTHR21089:SF1">
    <property type="entry name" value="BIFUNCTIONAL 3-DEHYDROQUINATE DEHYDRATASE_SHIKIMATE DEHYDROGENASE, CHLOROPLASTIC"/>
    <property type="match status" value="1"/>
</dbReference>
<dbReference type="PANTHER" id="PTHR21089">
    <property type="entry name" value="SHIKIMATE DEHYDROGENASE"/>
    <property type="match status" value="1"/>
</dbReference>
<dbReference type="Pfam" id="PF18317">
    <property type="entry name" value="SDH_C"/>
    <property type="match status" value="1"/>
</dbReference>
<dbReference type="Pfam" id="PF01488">
    <property type="entry name" value="Shikimate_DH"/>
    <property type="match status" value="1"/>
</dbReference>
<dbReference type="Pfam" id="PF08501">
    <property type="entry name" value="Shikimate_dh_N"/>
    <property type="match status" value="1"/>
</dbReference>
<dbReference type="SUPFAM" id="SSF53223">
    <property type="entry name" value="Aminoacid dehydrogenase-like, N-terminal domain"/>
    <property type="match status" value="1"/>
</dbReference>
<dbReference type="SUPFAM" id="SSF51735">
    <property type="entry name" value="NAD(P)-binding Rossmann-fold domains"/>
    <property type="match status" value="1"/>
</dbReference>
<comment type="function">
    <text evidence="1">Involved in the biosynthesis of the chorismate, which leads to the biosynthesis of aromatic amino acids. Catalyzes the reversible NADPH linked reduction of 3-dehydroshikimate (DHSA) to yield shikimate (SA).</text>
</comment>
<comment type="catalytic activity">
    <reaction evidence="1">
        <text>shikimate + NADP(+) = 3-dehydroshikimate + NADPH + H(+)</text>
        <dbReference type="Rhea" id="RHEA:17737"/>
        <dbReference type="ChEBI" id="CHEBI:15378"/>
        <dbReference type="ChEBI" id="CHEBI:16630"/>
        <dbReference type="ChEBI" id="CHEBI:36208"/>
        <dbReference type="ChEBI" id="CHEBI:57783"/>
        <dbReference type="ChEBI" id="CHEBI:58349"/>
        <dbReference type="EC" id="1.1.1.25"/>
    </reaction>
</comment>
<comment type="pathway">
    <text evidence="1">Metabolic intermediate biosynthesis; chorismate biosynthesis; chorismate from D-erythrose 4-phosphate and phosphoenolpyruvate: step 4/7.</text>
</comment>
<comment type="subunit">
    <text evidence="1">Homodimer.</text>
</comment>
<comment type="similarity">
    <text evidence="1">Belongs to the shikimate dehydrogenase family.</text>
</comment>
<name>AROE_METAC</name>
<feature type="chain" id="PRO_0000136059" description="Shikimate dehydrogenase (NADP(+))">
    <location>
        <begin position="1"/>
        <end position="280"/>
    </location>
</feature>
<feature type="active site" description="Proton acceptor" evidence="1">
    <location>
        <position position="66"/>
    </location>
</feature>
<feature type="binding site" evidence="1">
    <location>
        <begin position="15"/>
        <end position="17"/>
    </location>
    <ligand>
        <name>shikimate</name>
        <dbReference type="ChEBI" id="CHEBI:36208"/>
    </ligand>
</feature>
<feature type="binding site" evidence="1">
    <location>
        <position position="62"/>
    </location>
    <ligand>
        <name>shikimate</name>
        <dbReference type="ChEBI" id="CHEBI:36208"/>
    </ligand>
</feature>
<feature type="binding site" evidence="1">
    <location>
        <position position="88"/>
    </location>
    <ligand>
        <name>shikimate</name>
        <dbReference type="ChEBI" id="CHEBI:36208"/>
    </ligand>
</feature>
<feature type="binding site" evidence="1">
    <location>
        <position position="104"/>
    </location>
    <ligand>
        <name>shikimate</name>
        <dbReference type="ChEBI" id="CHEBI:36208"/>
    </ligand>
</feature>
<feature type="binding site" evidence="1">
    <location>
        <begin position="128"/>
        <end position="132"/>
    </location>
    <ligand>
        <name>NADP(+)</name>
        <dbReference type="ChEBI" id="CHEBI:58349"/>
    </ligand>
</feature>
<feature type="binding site" evidence="1">
    <location>
        <begin position="151"/>
        <end position="156"/>
    </location>
    <ligand>
        <name>NADP(+)</name>
        <dbReference type="ChEBI" id="CHEBI:58349"/>
    </ligand>
</feature>
<feature type="binding site" evidence="1">
    <location>
        <position position="222"/>
    </location>
    <ligand>
        <name>NADP(+)</name>
        <dbReference type="ChEBI" id="CHEBI:58349"/>
    </ligand>
</feature>
<feature type="binding site" evidence="1">
    <location>
        <position position="224"/>
    </location>
    <ligand>
        <name>shikimate</name>
        <dbReference type="ChEBI" id="CHEBI:36208"/>
    </ligand>
</feature>
<feature type="binding site" evidence="1">
    <location>
        <position position="245"/>
    </location>
    <ligand>
        <name>NADP(+)</name>
        <dbReference type="ChEBI" id="CHEBI:58349"/>
    </ligand>
</feature>
<protein>
    <recommendedName>
        <fullName evidence="1">Shikimate dehydrogenase (NADP(+))</fullName>
        <shortName evidence="1">SDH</shortName>
        <ecNumber evidence="1">1.1.1.25</ecNumber>
    </recommendedName>
</protein>